<evidence type="ECO:0000250" key="1"/>
<evidence type="ECO:0000255" key="2">
    <source>
        <dbReference type="PROSITE-ProRule" id="PRU01066"/>
    </source>
</evidence>
<evidence type="ECO:0000256" key="3">
    <source>
        <dbReference type="SAM" id="MobiDB-lite"/>
    </source>
</evidence>
<comment type="function">
    <text>Biotin carrier subunit of the primary sodium pump glutaconyl-CoA decarboxylase (GCD).</text>
</comment>
<comment type="catalytic activity">
    <reaction>
        <text>(2E)-glutaconyl-CoA + Na(+)(in) + H(+) = (2E)-butenoyl-CoA + Na(+)(out) + CO2</text>
        <dbReference type="Rhea" id="RHEA:23972"/>
        <dbReference type="ChEBI" id="CHEBI:15378"/>
        <dbReference type="ChEBI" id="CHEBI:16526"/>
        <dbReference type="ChEBI" id="CHEBI:29101"/>
        <dbReference type="ChEBI" id="CHEBI:57332"/>
        <dbReference type="ChEBI" id="CHEBI:57353"/>
        <dbReference type="EC" id="7.2.4.5"/>
    </reaction>
</comment>
<comment type="cofactor">
    <cofactor>
        <name>biotin</name>
        <dbReference type="ChEBI" id="CHEBI:57586"/>
    </cofactor>
</comment>
<comment type="pathway">
    <text>Amino-acid degradation; L-glutamate degradation via hydroxyglutarate pathway; crotonoyl-CoA from L-glutamate: step 5/5.</text>
</comment>
<comment type="subunit">
    <text>Heterooctamer consisting of two alpha, two beta, two gamma and two delta subunits.</text>
</comment>
<reference key="1">
    <citation type="journal article" date="1999" name="Mol. Microbiol.">
        <title>The sodium ion translocating glutaconyl-CoA decarboxylase from Acidaminococcus fermentans: cloning and function of the genes forming a second operon.</title>
        <authorList>
            <person name="Braune A."/>
            <person name="Bendrat K."/>
            <person name="Rospert S."/>
            <person name="Buckel W."/>
        </authorList>
    </citation>
    <scope>NUCLEOTIDE SEQUENCE [GENOMIC DNA]</scope>
    <scope>PROTEIN SEQUENCE OF 1-34</scope>
</reference>
<reference key="2">
    <citation type="journal article" date="2010" name="Stand. Genomic Sci.">
        <title>Complete genome sequence of Acidaminococcus fermentans type strain (VR4).</title>
        <authorList>
            <person name="Chang Y.J."/>
            <person name="Pukall R."/>
            <person name="Saunders E."/>
            <person name="Lapidus A."/>
            <person name="Copeland A."/>
            <person name="Nolan M."/>
            <person name="Glavina Del Rio T."/>
            <person name="Lucas S."/>
            <person name="Chen F."/>
            <person name="Tice H."/>
            <person name="Cheng J.F."/>
            <person name="Han C."/>
            <person name="Detter J.C."/>
            <person name="Bruce D."/>
            <person name="Goodwin L."/>
            <person name="Pitluck S."/>
            <person name="Mikhailova N."/>
            <person name="Liolios K."/>
            <person name="Pati A."/>
            <person name="Ivanova N."/>
            <person name="Mavromatis K."/>
            <person name="Chen A."/>
            <person name="Palaniappan K."/>
            <person name="Land M."/>
            <person name="Hauser L."/>
            <person name="Jeffries C.D."/>
            <person name="Brettin T."/>
            <person name="Rohde M."/>
            <person name="Goker M."/>
            <person name="Bristow J."/>
            <person name="Eisen J.A."/>
            <person name="Markowitz V."/>
            <person name="Hugenholtz P."/>
            <person name="Kyrpides N.C."/>
            <person name="Klenk H.P."/>
        </authorList>
    </citation>
    <scope>NUCLEOTIDE SEQUENCE [LARGE SCALE GENOMIC DNA]</scope>
    <source>
        <strain>ATCC 25085 / DSM 20731 / CCUG 9996 / CIP 106432 / VR4</strain>
    </source>
</reference>
<accession>Q9ZAA7</accession>
<accession>D2RM87</accession>
<dbReference type="EC" id="7.2.4.5"/>
<dbReference type="EMBL" id="AF030576">
    <property type="protein sequence ID" value="AAC69172.1"/>
    <property type="molecule type" value="Genomic_DNA"/>
</dbReference>
<dbReference type="EMBL" id="CP001859">
    <property type="protein sequence ID" value="ADB48189.1"/>
    <property type="molecule type" value="Genomic_DNA"/>
</dbReference>
<dbReference type="RefSeq" id="WP_012939172.1">
    <property type="nucleotide sequence ID" value="NC_013740.1"/>
</dbReference>
<dbReference type="SMR" id="Q9ZAA7"/>
<dbReference type="STRING" id="591001.Acfer_1835"/>
<dbReference type="TCDB" id="3.B.1.1.3">
    <property type="family name" value="the na(+)-transporting carboxylic acid decarboxylase (nat-dc) family"/>
</dbReference>
<dbReference type="GeneID" id="78335531"/>
<dbReference type="KEGG" id="afn:Acfer_1835"/>
<dbReference type="eggNOG" id="COG4770">
    <property type="taxonomic scope" value="Bacteria"/>
</dbReference>
<dbReference type="HOGENOM" id="CLU_016733_5_2_9"/>
<dbReference type="OrthoDB" id="9812676at2"/>
<dbReference type="BioCyc" id="MetaCyc:MONOMER-1056"/>
<dbReference type="BRENDA" id="7.2.4.5">
    <property type="organism ID" value="85"/>
</dbReference>
<dbReference type="SABIO-RK" id="Q9ZAA7"/>
<dbReference type="UniPathway" id="UPA00533">
    <property type="reaction ID" value="UER00688"/>
</dbReference>
<dbReference type="Proteomes" id="UP000001902">
    <property type="component" value="Chromosome"/>
</dbReference>
<dbReference type="GO" id="GO:0018801">
    <property type="term" value="F:glutaconyl-CoA decarboxylase activity"/>
    <property type="evidence" value="ECO:0007669"/>
    <property type="project" value="UniProtKB-EC"/>
</dbReference>
<dbReference type="GO" id="GO:0019552">
    <property type="term" value="P:glutamate catabolic process via 2-hydroxyglutarate"/>
    <property type="evidence" value="ECO:0007669"/>
    <property type="project" value="UniProtKB-UniPathway"/>
</dbReference>
<dbReference type="GO" id="GO:0006814">
    <property type="term" value="P:sodium ion transport"/>
    <property type="evidence" value="ECO:0007669"/>
    <property type="project" value="UniProtKB-KW"/>
</dbReference>
<dbReference type="CDD" id="cd06850">
    <property type="entry name" value="biotinyl_domain"/>
    <property type="match status" value="1"/>
</dbReference>
<dbReference type="FunFam" id="2.40.50.100:FF:000003">
    <property type="entry name" value="Acetyl-CoA carboxylase biotin carboxyl carrier protein"/>
    <property type="match status" value="1"/>
</dbReference>
<dbReference type="Gene3D" id="2.40.50.100">
    <property type="match status" value="1"/>
</dbReference>
<dbReference type="InterPro" id="IPR001882">
    <property type="entry name" value="Biotin_BS"/>
</dbReference>
<dbReference type="InterPro" id="IPR050709">
    <property type="entry name" value="Biotin_Carboxyl_Carrier/Decarb"/>
</dbReference>
<dbReference type="InterPro" id="IPR000089">
    <property type="entry name" value="Biotin_lipoyl"/>
</dbReference>
<dbReference type="InterPro" id="IPR011053">
    <property type="entry name" value="Single_hybrid_motif"/>
</dbReference>
<dbReference type="PANTHER" id="PTHR45266">
    <property type="entry name" value="OXALOACETATE DECARBOXYLASE ALPHA CHAIN"/>
    <property type="match status" value="1"/>
</dbReference>
<dbReference type="PANTHER" id="PTHR45266:SF3">
    <property type="entry name" value="OXALOACETATE DECARBOXYLASE ALPHA CHAIN"/>
    <property type="match status" value="1"/>
</dbReference>
<dbReference type="Pfam" id="PF00364">
    <property type="entry name" value="Biotin_lipoyl"/>
    <property type="match status" value="1"/>
</dbReference>
<dbReference type="SUPFAM" id="SSF51230">
    <property type="entry name" value="Single hybrid motif"/>
    <property type="match status" value="1"/>
</dbReference>
<dbReference type="PROSITE" id="PS00188">
    <property type="entry name" value="BIOTIN"/>
    <property type="match status" value="1"/>
</dbReference>
<dbReference type="PROSITE" id="PS50968">
    <property type="entry name" value="BIOTINYL_LIPOYL"/>
    <property type="match status" value="1"/>
</dbReference>
<organism>
    <name type="scientific">Acidaminococcus fermentans (strain ATCC 25085 / DSM 20731 / CCUG 9996 / CIP 106432 / VR4)</name>
    <dbReference type="NCBI Taxonomy" id="591001"/>
    <lineage>
        <taxon>Bacteria</taxon>
        <taxon>Bacillati</taxon>
        <taxon>Bacillota</taxon>
        <taxon>Negativicutes</taxon>
        <taxon>Acidaminococcales</taxon>
        <taxon>Acidaminococcaceae</taxon>
        <taxon>Acidaminococcus</taxon>
    </lineage>
</organism>
<name>GCDC_ACIFV</name>
<keyword id="KW-0092">Biotin</keyword>
<keyword id="KW-0210">Decarboxylase</keyword>
<keyword id="KW-0903">Direct protein sequencing</keyword>
<keyword id="KW-0406">Ion transport</keyword>
<keyword id="KW-0456">Lyase</keyword>
<keyword id="KW-1185">Reference proteome</keyword>
<keyword id="KW-0915">Sodium</keyword>
<keyword id="KW-0739">Sodium transport</keyword>
<keyword id="KW-1278">Translocase</keyword>
<keyword id="KW-0813">Transport</keyword>
<feature type="chain" id="PRO_0000146839" description="Glutaconyl-CoA decarboxylase subunit gamma">
    <location>
        <begin position="1"/>
        <end position="145"/>
    </location>
</feature>
<feature type="domain" description="Biotinyl-binding" evidence="2">
    <location>
        <begin position="77"/>
        <end position="145"/>
    </location>
</feature>
<feature type="region of interest" description="Disordered" evidence="3">
    <location>
        <begin position="52"/>
        <end position="82"/>
    </location>
</feature>
<feature type="compositionally biased region" description="Low complexity" evidence="3">
    <location>
        <begin position="57"/>
        <end position="75"/>
    </location>
</feature>
<feature type="modified residue" description="N6-biotinyllysine" evidence="1 2">
    <location>
        <position position="112"/>
    </location>
</feature>
<gene>
    <name type="primary">gcdC</name>
    <name type="ordered locus">Acfer_1835</name>
</gene>
<proteinExistence type="evidence at protein level"/>
<protein>
    <recommendedName>
        <fullName>Glutaconyl-CoA decarboxylase subunit gamma</fullName>
        <ecNumber>7.2.4.5</ecNumber>
    </recommendedName>
    <alternativeName>
        <fullName>Biotin carrier</fullName>
    </alternativeName>
</protein>
<sequence length="145" mass="13908">MRKFNVNVNGTVYTVEVEEVGGAVTAAPAAPAAPAAAPAAAPVAAAPAAAPAPAPAAAPAAAPAPAAKPAAAAPAGSVTVSAPMPGKILSVNVKPGDKVEAGDVLLILEAMKMQNEIMAPEDGTVSEVRVNAGDTVATGDVMVIL</sequence>